<accession>C5BF62</accession>
<name>RNPA_EDWI9</name>
<keyword id="KW-0255">Endonuclease</keyword>
<keyword id="KW-0378">Hydrolase</keyword>
<keyword id="KW-0540">Nuclease</keyword>
<keyword id="KW-0694">RNA-binding</keyword>
<keyword id="KW-0819">tRNA processing</keyword>
<comment type="function">
    <text evidence="1">RNaseP catalyzes the removal of the 5'-leader sequence from pre-tRNA to produce the mature 5'-terminus. It can also cleave other RNA substrates such as 4.5S RNA. The protein component plays an auxiliary but essential role in vivo by binding to the 5'-leader sequence and broadening the substrate specificity of the ribozyme.</text>
</comment>
<comment type="catalytic activity">
    <reaction evidence="1">
        <text>Endonucleolytic cleavage of RNA, removing 5'-extranucleotides from tRNA precursor.</text>
        <dbReference type="EC" id="3.1.26.5"/>
    </reaction>
</comment>
<comment type="subunit">
    <text evidence="1">Consists of a catalytic RNA component (M1 or rnpB) and a protein subunit.</text>
</comment>
<comment type="similarity">
    <text evidence="1">Belongs to the RnpA family.</text>
</comment>
<reference key="1">
    <citation type="submission" date="2009-03" db="EMBL/GenBank/DDBJ databases">
        <title>Complete genome sequence of Edwardsiella ictaluri 93-146.</title>
        <authorList>
            <person name="Williams M.L."/>
            <person name="Gillaspy A.F."/>
            <person name="Dyer D.W."/>
            <person name="Thune R.L."/>
            <person name="Waldbieser G.C."/>
            <person name="Schuster S.C."/>
            <person name="Gipson J."/>
            <person name="Zaitshik J."/>
            <person name="Landry C."/>
            <person name="Lawrence M.L."/>
        </authorList>
    </citation>
    <scope>NUCLEOTIDE SEQUENCE [LARGE SCALE GENOMIC DNA]</scope>
    <source>
        <strain>93-146</strain>
    </source>
</reference>
<sequence length="119" mass="14068">MVKLSFPRELRLLTPNHFNFVFQQPQRAGTPQLTILGRMNSLGYPRIGLTVAKKHVKRAHERNRIKRLTRESFRLRQHSLPAMDFVVIVKKGVQELDNRALTEMLEKLWRRHCRQARAS</sequence>
<organism>
    <name type="scientific">Edwardsiella ictaluri (strain 93-146)</name>
    <dbReference type="NCBI Taxonomy" id="634503"/>
    <lineage>
        <taxon>Bacteria</taxon>
        <taxon>Pseudomonadati</taxon>
        <taxon>Pseudomonadota</taxon>
        <taxon>Gammaproteobacteria</taxon>
        <taxon>Enterobacterales</taxon>
        <taxon>Hafniaceae</taxon>
        <taxon>Edwardsiella</taxon>
    </lineage>
</organism>
<proteinExistence type="inferred from homology"/>
<gene>
    <name evidence="1" type="primary">rnpA</name>
    <name type="ordered locus">NT01EI_3934</name>
</gene>
<protein>
    <recommendedName>
        <fullName evidence="1">Ribonuclease P protein component</fullName>
        <shortName evidence="1">RNase P protein</shortName>
        <shortName evidence="1">RNaseP protein</shortName>
        <ecNumber evidence="1">3.1.26.5</ecNumber>
    </recommendedName>
    <alternativeName>
        <fullName evidence="1">Protein C5</fullName>
    </alternativeName>
</protein>
<feature type="chain" id="PRO_1000204345" description="Ribonuclease P protein component">
    <location>
        <begin position="1"/>
        <end position="119"/>
    </location>
</feature>
<evidence type="ECO:0000255" key="1">
    <source>
        <dbReference type="HAMAP-Rule" id="MF_00227"/>
    </source>
</evidence>
<dbReference type="EC" id="3.1.26.5" evidence="1"/>
<dbReference type="EMBL" id="CP001600">
    <property type="protein sequence ID" value="ACR71045.1"/>
    <property type="molecule type" value="Genomic_DNA"/>
</dbReference>
<dbReference type="RefSeq" id="WP_015873072.1">
    <property type="nucleotide sequence ID" value="NZ_CP169062.1"/>
</dbReference>
<dbReference type="SMR" id="C5BF62"/>
<dbReference type="STRING" id="67780.B6E78_11185"/>
<dbReference type="GeneID" id="69540748"/>
<dbReference type="KEGG" id="eic:NT01EI_3934"/>
<dbReference type="HOGENOM" id="CLU_117179_11_0_6"/>
<dbReference type="OrthoDB" id="9796422at2"/>
<dbReference type="Proteomes" id="UP000001485">
    <property type="component" value="Chromosome"/>
</dbReference>
<dbReference type="GO" id="GO:0030677">
    <property type="term" value="C:ribonuclease P complex"/>
    <property type="evidence" value="ECO:0007669"/>
    <property type="project" value="TreeGrafter"/>
</dbReference>
<dbReference type="GO" id="GO:0042781">
    <property type="term" value="F:3'-tRNA processing endoribonuclease activity"/>
    <property type="evidence" value="ECO:0007669"/>
    <property type="project" value="TreeGrafter"/>
</dbReference>
<dbReference type="GO" id="GO:0004526">
    <property type="term" value="F:ribonuclease P activity"/>
    <property type="evidence" value="ECO:0007669"/>
    <property type="project" value="UniProtKB-UniRule"/>
</dbReference>
<dbReference type="GO" id="GO:0000049">
    <property type="term" value="F:tRNA binding"/>
    <property type="evidence" value="ECO:0007669"/>
    <property type="project" value="UniProtKB-UniRule"/>
</dbReference>
<dbReference type="GO" id="GO:0001682">
    <property type="term" value="P:tRNA 5'-leader removal"/>
    <property type="evidence" value="ECO:0007669"/>
    <property type="project" value="UniProtKB-UniRule"/>
</dbReference>
<dbReference type="FunFam" id="3.30.230.10:FF:000016">
    <property type="entry name" value="Ribonuclease P protein component"/>
    <property type="match status" value="1"/>
</dbReference>
<dbReference type="Gene3D" id="3.30.230.10">
    <property type="match status" value="1"/>
</dbReference>
<dbReference type="HAMAP" id="MF_00227">
    <property type="entry name" value="RNase_P"/>
    <property type="match status" value="1"/>
</dbReference>
<dbReference type="InterPro" id="IPR020568">
    <property type="entry name" value="Ribosomal_Su5_D2-typ_SF"/>
</dbReference>
<dbReference type="InterPro" id="IPR014721">
    <property type="entry name" value="Ribsml_uS5_D2-typ_fold_subgr"/>
</dbReference>
<dbReference type="InterPro" id="IPR000100">
    <property type="entry name" value="RNase_P"/>
</dbReference>
<dbReference type="InterPro" id="IPR020539">
    <property type="entry name" value="RNase_P_CS"/>
</dbReference>
<dbReference type="NCBIfam" id="TIGR00188">
    <property type="entry name" value="rnpA"/>
    <property type="match status" value="1"/>
</dbReference>
<dbReference type="PANTHER" id="PTHR33992">
    <property type="entry name" value="RIBONUCLEASE P PROTEIN COMPONENT"/>
    <property type="match status" value="1"/>
</dbReference>
<dbReference type="PANTHER" id="PTHR33992:SF1">
    <property type="entry name" value="RIBONUCLEASE P PROTEIN COMPONENT"/>
    <property type="match status" value="1"/>
</dbReference>
<dbReference type="Pfam" id="PF00825">
    <property type="entry name" value="Ribonuclease_P"/>
    <property type="match status" value="1"/>
</dbReference>
<dbReference type="SUPFAM" id="SSF54211">
    <property type="entry name" value="Ribosomal protein S5 domain 2-like"/>
    <property type="match status" value="1"/>
</dbReference>
<dbReference type="PROSITE" id="PS00648">
    <property type="entry name" value="RIBONUCLEASE_P"/>
    <property type="match status" value="1"/>
</dbReference>